<proteinExistence type="inferred from homology"/>
<keyword id="KW-0963">Cytoplasm</keyword>
<keyword id="KW-0489">Methyltransferase</keyword>
<keyword id="KW-0949">S-adenosyl-L-methionine</keyword>
<keyword id="KW-0808">Transferase</keyword>
<comment type="function">
    <text evidence="1">Methylates ribosomal protein L11.</text>
</comment>
<comment type="catalytic activity">
    <reaction evidence="1">
        <text>L-lysyl-[protein] + 3 S-adenosyl-L-methionine = N(6),N(6),N(6)-trimethyl-L-lysyl-[protein] + 3 S-adenosyl-L-homocysteine + 3 H(+)</text>
        <dbReference type="Rhea" id="RHEA:54192"/>
        <dbReference type="Rhea" id="RHEA-COMP:9752"/>
        <dbReference type="Rhea" id="RHEA-COMP:13826"/>
        <dbReference type="ChEBI" id="CHEBI:15378"/>
        <dbReference type="ChEBI" id="CHEBI:29969"/>
        <dbReference type="ChEBI" id="CHEBI:57856"/>
        <dbReference type="ChEBI" id="CHEBI:59789"/>
        <dbReference type="ChEBI" id="CHEBI:61961"/>
    </reaction>
</comment>
<comment type="subcellular location">
    <subcellularLocation>
        <location evidence="1">Cytoplasm</location>
    </subcellularLocation>
</comment>
<comment type="similarity">
    <text evidence="1">Belongs to the methyltransferase superfamily. PrmA family.</text>
</comment>
<protein>
    <recommendedName>
        <fullName evidence="1">Ribosomal protein L11 methyltransferase</fullName>
        <shortName evidence="1">L11 Mtase</shortName>
        <ecNumber evidence="1">2.1.1.-</ecNumber>
    </recommendedName>
</protein>
<feature type="chain" id="PRO_1000148140" description="Ribosomal protein L11 methyltransferase">
    <location>
        <begin position="1"/>
        <end position="317"/>
    </location>
</feature>
<feature type="binding site" evidence="1">
    <location>
        <position position="158"/>
    </location>
    <ligand>
        <name>S-adenosyl-L-methionine</name>
        <dbReference type="ChEBI" id="CHEBI:59789"/>
    </ligand>
</feature>
<feature type="binding site" evidence="1">
    <location>
        <position position="179"/>
    </location>
    <ligand>
        <name>S-adenosyl-L-methionine</name>
        <dbReference type="ChEBI" id="CHEBI:59789"/>
    </ligand>
</feature>
<feature type="binding site" evidence="1">
    <location>
        <position position="201"/>
    </location>
    <ligand>
        <name>S-adenosyl-L-methionine</name>
        <dbReference type="ChEBI" id="CHEBI:59789"/>
    </ligand>
</feature>
<feature type="binding site" evidence="1">
    <location>
        <position position="244"/>
    </location>
    <ligand>
        <name>S-adenosyl-L-methionine</name>
        <dbReference type="ChEBI" id="CHEBI:59789"/>
    </ligand>
</feature>
<gene>
    <name evidence="1" type="primary">prmA</name>
    <name type="ordered locus">SEQ_2024</name>
</gene>
<accession>C0M9U4</accession>
<sequence length="317" mass="34488">MKAWQELTITVHREAEEAVSNLLIEAGSQGVAINDTADYIGQEDRFGELYPAVEQSEMVTITAYYPSSADIDDIRQTINQGLNRLKQCDVELGELTLTNQELAEEDWADNWKAYYEPARITHDLTIVPSWTDYEATAGEKIIRLDPGMAFGTGTHPTTKLSLFALEQVLRGGETVIDVGTGSGVLSIASSLLGAKEVFAYDLDDVAVRVAKDNIALNQATDNIHVAAGDLLKGLTQEADVIVANILADILVHVTADAYRLIKSEGYLIMSGIISEKLDMVKQAALNAGFLLETHMLQGEWNALIFKKTDDLSGVIGG</sequence>
<evidence type="ECO:0000255" key="1">
    <source>
        <dbReference type="HAMAP-Rule" id="MF_00735"/>
    </source>
</evidence>
<reference key="1">
    <citation type="journal article" date="2009" name="PLoS Pathog.">
        <title>Genomic evidence for the evolution of Streptococcus equi: host restriction, increased virulence, and genetic exchange with human pathogens.</title>
        <authorList>
            <person name="Holden M.T.G."/>
            <person name="Heather Z."/>
            <person name="Paillot R."/>
            <person name="Steward K.F."/>
            <person name="Webb K."/>
            <person name="Ainslie F."/>
            <person name="Jourdan T."/>
            <person name="Bason N.C."/>
            <person name="Holroyd N.E."/>
            <person name="Mungall K."/>
            <person name="Quail M.A."/>
            <person name="Sanders M."/>
            <person name="Simmonds M."/>
            <person name="Willey D."/>
            <person name="Brooks K."/>
            <person name="Aanensen D.M."/>
            <person name="Spratt B.G."/>
            <person name="Jolley K.A."/>
            <person name="Maiden M.C.J."/>
            <person name="Kehoe M."/>
            <person name="Chanter N."/>
            <person name="Bentley S.D."/>
            <person name="Robinson C."/>
            <person name="Maskell D.J."/>
            <person name="Parkhill J."/>
            <person name="Waller A.S."/>
        </authorList>
    </citation>
    <scope>NUCLEOTIDE SEQUENCE [LARGE SCALE GENOMIC DNA]</scope>
    <source>
        <strain>4047</strain>
    </source>
</reference>
<name>PRMA_STRE4</name>
<organism>
    <name type="scientific">Streptococcus equi subsp. equi (strain 4047)</name>
    <dbReference type="NCBI Taxonomy" id="553482"/>
    <lineage>
        <taxon>Bacteria</taxon>
        <taxon>Bacillati</taxon>
        <taxon>Bacillota</taxon>
        <taxon>Bacilli</taxon>
        <taxon>Lactobacillales</taxon>
        <taxon>Streptococcaceae</taxon>
        <taxon>Streptococcus</taxon>
    </lineage>
</organism>
<dbReference type="EC" id="2.1.1.-" evidence="1"/>
<dbReference type="EMBL" id="FM204883">
    <property type="protein sequence ID" value="CAW95301.1"/>
    <property type="molecule type" value="Genomic_DNA"/>
</dbReference>
<dbReference type="RefSeq" id="WP_012516366.1">
    <property type="nucleotide sequence ID" value="NC_012471.1"/>
</dbReference>
<dbReference type="SMR" id="C0M9U4"/>
<dbReference type="KEGG" id="seu:SEQ_2024"/>
<dbReference type="HOGENOM" id="CLU_049382_0_1_9"/>
<dbReference type="OrthoDB" id="9785995at2"/>
<dbReference type="Proteomes" id="UP000001365">
    <property type="component" value="Chromosome"/>
</dbReference>
<dbReference type="GO" id="GO:0005737">
    <property type="term" value="C:cytoplasm"/>
    <property type="evidence" value="ECO:0007669"/>
    <property type="project" value="UniProtKB-SubCell"/>
</dbReference>
<dbReference type="GO" id="GO:0016279">
    <property type="term" value="F:protein-lysine N-methyltransferase activity"/>
    <property type="evidence" value="ECO:0007669"/>
    <property type="project" value="RHEA"/>
</dbReference>
<dbReference type="GO" id="GO:0032259">
    <property type="term" value="P:methylation"/>
    <property type="evidence" value="ECO:0007669"/>
    <property type="project" value="UniProtKB-KW"/>
</dbReference>
<dbReference type="CDD" id="cd02440">
    <property type="entry name" value="AdoMet_MTases"/>
    <property type="match status" value="1"/>
</dbReference>
<dbReference type="Gene3D" id="3.40.50.150">
    <property type="entry name" value="Vaccinia Virus protein VP39"/>
    <property type="match status" value="1"/>
</dbReference>
<dbReference type="HAMAP" id="MF_00735">
    <property type="entry name" value="Methyltr_PrmA"/>
    <property type="match status" value="1"/>
</dbReference>
<dbReference type="InterPro" id="IPR050078">
    <property type="entry name" value="Ribosomal_L11_MeTrfase_PrmA"/>
</dbReference>
<dbReference type="InterPro" id="IPR004498">
    <property type="entry name" value="Ribosomal_PrmA_MeTrfase"/>
</dbReference>
<dbReference type="InterPro" id="IPR029063">
    <property type="entry name" value="SAM-dependent_MTases_sf"/>
</dbReference>
<dbReference type="NCBIfam" id="TIGR00406">
    <property type="entry name" value="prmA"/>
    <property type="match status" value="1"/>
</dbReference>
<dbReference type="PANTHER" id="PTHR43648">
    <property type="entry name" value="ELECTRON TRANSFER FLAVOPROTEIN BETA SUBUNIT LYSINE METHYLTRANSFERASE"/>
    <property type="match status" value="1"/>
</dbReference>
<dbReference type="PANTHER" id="PTHR43648:SF1">
    <property type="entry name" value="ELECTRON TRANSFER FLAVOPROTEIN BETA SUBUNIT LYSINE METHYLTRANSFERASE"/>
    <property type="match status" value="1"/>
</dbReference>
<dbReference type="Pfam" id="PF06325">
    <property type="entry name" value="PrmA"/>
    <property type="match status" value="1"/>
</dbReference>
<dbReference type="PIRSF" id="PIRSF000401">
    <property type="entry name" value="RPL11_MTase"/>
    <property type="match status" value="1"/>
</dbReference>
<dbReference type="SUPFAM" id="SSF53335">
    <property type="entry name" value="S-adenosyl-L-methionine-dependent methyltransferases"/>
    <property type="match status" value="1"/>
</dbReference>